<name>SYD_STAES</name>
<sequence length="588" mass="66883">MNKRTTYCGLVTEEFLNEKVTLKGWVHNRRDLGGLIFVDLRDREGIVQIVFNPDFSEEALQVAETVRSEYVVEVEGVVTKRDAETINPKIKTGQVEVQVSNIEIINKSETPPFSINEENVNVDENIRLKYRYLDLRRQELAQTFKMRHQTTRSIRQYLDNNGFFDIETPVLTKSTPEGARDYLVPSRVHEGEFYALPQSPQLFKQLLMISGFDKYYQIVKCFRDEDLRADRQPEFTQVDIEMSFVDQEDIIAMGEDMLRKVVKDVKGIDVSGPFPRMTYAEAMDRFGSDKPDTRFGMELINVSQLGKEMNFKVFKDTVDNNGEIKAIVAKDAANKYTRKDMDALTEFVNIYGAKGLAWVKVVDDGLSGPIARFFEDVNVETLKQLTEAKPGDLVMFVADKPNVVAQSLGALRIKLAKELGLIDESKLNFLWVTDWPLLEYDEDAKRYVAAHHPFTSPKREDIEKLDTEPENVQANAYDIVLNGYELGGGSIRIHDGELQQKMFEVLGFTNEQAQEQFGFLLDAFKYGAPPHGGIALGLDRLVMLLTNRTNLRDTIAFPKTASATCLLTDAPGEVSDKQLQELSLRIRH</sequence>
<dbReference type="EC" id="6.1.1.12" evidence="1"/>
<dbReference type="EMBL" id="AE015929">
    <property type="protein sequence ID" value="AAO04910.1"/>
    <property type="molecule type" value="Genomic_DNA"/>
</dbReference>
<dbReference type="RefSeq" id="NP_764866.1">
    <property type="nucleotide sequence ID" value="NC_004461.1"/>
</dbReference>
<dbReference type="RefSeq" id="WP_001830852.1">
    <property type="nucleotide sequence ID" value="NZ_WBME01000059.1"/>
</dbReference>
<dbReference type="SMR" id="Q8CS99"/>
<dbReference type="GeneID" id="50018572"/>
<dbReference type="KEGG" id="sep:SE_1311"/>
<dbReference type="PATRIC" id="fig|176280.10.peg.1280"/>
<dbReference type="eggNOG" id="COG0173">
    <property type="taxonomic scope" value="Bacteria"/>
</dbReference>
<dbReference type="HOGENOM" id="CLU_014330_3_2_9"/>
<dbReference type="OrthoDB" id="9802326at2"/>
<dbReference type="Proteomes" id="UP000001411">
    <property type="component" value="Chromosome"/>
</dbReference>
<dbReference type="GO" id="GO:0005737">
    <property type="term" value="C:cytoplasm"/>
    <property type="evidence" value="ECO:0007669"/>
    <property type="project" value="UniProtKB-SubCell"/>
</dbReference>
<dbReference type="GO" id="GO:0004815">
    <property type="term" value="F:aspartate-tRNA ligase activity"/>
    <property type="evidence" value="ECO:0007669"/>
    <property type="project" value="UniProtKB-UniRule"/>
</dbReference>
<dbReference type="GO" id="GO:0005524">
    <property type="term" value="F:ATP binding"/>
    <property type="evidence" value="ECO:0007669"/>
    <property type="project" value="UniProtKB-UniRule"/>
</dbReference>
<dbReference type="GO" id="GO:0140096">
    <property type="term" value="F:catalytic activity, acting on a protein"/>
    <property type="evidence" value="ECO:0007669"/>
    <property type="project" value="UniProtKB-ARBA"/>
</dbReference>
<dbReference type="GO" id="GO:0003676">
    <property type="term" value="F:nucleic acid binding"/>
    <property type="evidence" value="ECO:0007669"/>
    <property type="project" value="InterPro"/>
</dbReference>
<dbReference type="GO" id="GO:0016740">
    <property type="term" value="F:transferase activity"/>
    <property type="evidence" value="ECO:0007669"/>
    <property type="project" value="UniProtKB-ARBA"/>
</dbReference>
<dbReference type="GO" id="GO:0006422">
    <property type="term" value="P:aspartyl-tRNA aminoacylation"/>
    <property type="evidence" value="ECO:0007669"/>
    <property type="project" value="UniProtKB-UniRule"/>
</dbReference>
<dbReference type="CDD" id="cd00777">
    <property type="entry name" value="AspRS_core"/>
    <property type="match status" value="1"/>
</dbReference>
<dbReference type="CDD" id="cd04317">
    <property type="entry name" value="EcAspRS_like_N"/>
    <property type="match status" value="1"/>
</dbReference>
<dbReference type="Gene3D" id="3.30.930.10">
    <property type="entry name" value="Bira Bifunctional Protein, Domain 2"/>
    <property type="match status" value="1"/>
</dbReference>
<dbReference type="Gene3D" id="3.30.1360.30">
    <property type="entry name" value="GAD-like domain"/>
    <property type="match status" value="1"/>
</dbReference>
<dbReference type="Gene3D" id="2.40.50.140">
    <property type="entry name" value="Nucleic acid-binding proteins"/>
    <property type="match status" value="1"/>
</dbReference>
<dbReference type="HAMAP" id="MF_00044">
    <property type="entry name" value="Asp_tRNA_synth_type1"/>
    <property type="match status" value="1"/>
</dbReference>
<dbReference type="InterPro" id="IPR004364">
    <property type="entry name" value="Aa-tRNA-synt_II"/>
</dbReference>
<dbReference type="InterPro" id="IPR006195">
    <property type="entry name" value="aa-tRNA-synth_II"/>
</dbReference>
<dbReference type="InterPro" id="IPR045864">
    <property type="entry name" value="aa-tRNA-synth_II/BPL/LPL"/>
</dbReference>
<dbReference type="InterPro" id="IPR004524">
    <property type="entry name" value="Asp-tRNA-ligase_1"/>
</dbReference>
<dbReference type="InterPro" id="IPR047089">
    <property type="entry name" value="Asp-tRNA-ligase_1_N"/>
</dbReference>
<dbReference type="InterPro" id="IPR002312">
    <property type="entry name" value="Asp/Asn-tRNA-synth_IIb"/>
</dbReference>
<dbReference type="InterPro" id="IPR047090">
    <property type="entry name" value="AspRS_core"/>
</dbReference>
<dbReference type="InterPro" id="IPR004115">
    <property type="entry name" value="GAD-like_sf"/>
</dbReference>
<dbReference type="InterPro" id="IPR029351">
    <property type="entry name" value="GAD_dom"/>
</dbReference>
<dbReference type="InterPro" id="IPR012340">
    <property type="entry name" value="NA-bd_OB-fold"/>
</dbReference>
<dbReference type="InterPro" id="IPR004365">
    <property type="entry name" value="NA-bd_OB_tRNA"/>
</dbReference>
<dbReference type="NCBIfam" id="TIGR00459">
    <property type="entry name" value="aspS_bact"/>
    <property type="match status" value="1"/>
</dbReference>
<dbReference type="NCBIfam" id="NF001750">
    <property type="entry name" value="PRK00476.1"/>
    <property type="match status" value="1"/>
</dbReference>
<dbReference type="PANTHER" id="PTHR22594:SF5">
    <property type="entry name" value="ASPARTATE--TRNA LIGASE, MITOCHONDRIAL"/>
    <property type="match status" value="1"/>
</dbReference>
<dbReference type="PANTHER" id="PTHR22594">
    <property type="entry name" value="ASPARTYL/LYSYL-TRNA SYNTHETASE"/>
    <property type="match status" value="1"/>
</dbReference>
<dbReference type="Pfam" id="PF02938">
    <property type="entry name" value="GAD"/>
    <property type="match status" value="1"/>
</dbReference>
<dbReference type="Pfam" id="PF00152">
    <property type="entry name" value="tRNA-synt_2"/>
    <property type="match status" value="1"/>
</dbReference>
<dbReference type="Pfam" id="PF01336">
    <property type="entry name" value="tRNA_anti-codon"/>
    <property type="match status" value="1"/>
</dbReference>
<dbReference type="PRINTS" id="PR01042">
    <property type="entry name" value="TRNASYNTHASP"/>
</dbReference>
<dbReference type="SUPFAM" id="SSF55681">
    <property type="entry name" value="Class II aaRS and biotin synthetases"/>
    <property type="match status" value="1"/>
</dbReference>
<dbReference type="SUPFAM" id="SSF55261">
    <property type="entry name" value="GAD domain-like"/>
    <property type="match status" value="1"/>
</dbReference>
<dbReference type="SUPFAM" id="SSF50249">
    <property type="entry name" value="Nucleic acid-binding proteins"/>
    <property type="match status" value="1"/>
</dbReference>
<dbReference type="PROSITE" id="PS50862">
    <property type="entry name" value="AA_TRNA_LIGASE_II"/>
    <property type="match status" value="1"/>
</dbReference>
<reference key="1">
    <citation type="journal article" date="2003" name="Mol. Microbiol.">
        <title>Genome-based analysis of virulence genes in a non-biofilm-forming Staphylococcus epidermidis strain (ATCC 12228).</title>
        <authorList>
            <person name="Zhang Y.-Q."/>
            <person name="Ren S.-X."/>
            <person name="Li H.-L."/>
            <person name="Wang Y.-X."/>
            <person name="Fu G."/>
            <person name="Yang J."/>
            <person name="Qin Z.-Q."/>
            <person name="Miao Y.-G."/>
            <person name="Wang W.-Y."/>
            <person name="Chen R.-S."/>
            <person name="Shen Y."/>
            <person name="Chen Z."/>
            <person name="Yuan Z.-H."/>
            <person name="Zhao G.-P."/>
            <person name="Qu D."/>
            <person name="Danchin A."/>
            <person name="Wen Y.-M."/>
        </authorList>
    </citation>
    <scope>NUCLEOTIDE SEQUENCE [LARGE SCALE GENOMIC DNA]</scope>
    <source>
        <strain>ATCC 12228 / FDA PCI 1200</strain>
    </source>
</reference>
<keyword id="KW-0030">Aminoacyl-tRNA synthetase</keyword>
<keyword id="KW-0067">ATP-binding</keyword>
<keyword id="KW-0963">Cytoplasm</keyword>
<keyword id="KW-0436">Ligase</keyword>
<keyword id="KW-0547">Nucleotide-binding</keyword>
<keyword id="KW-0648">Protein biosynthesis</keyword>
<gene>
    <name evidence="1" type="primary">aspS</name>
    <name type="ordered locus">SE_1311</name>
</gene>
<accession>Q8CS99</accession>
<comment type="function">
    <text evidence="1">Catalyzes the attachment of L-aspartate to tRNA(Asp) in a two-step reaction: L-aspartate is first activated by ATP to form Asp-AMP and then transferred to the acceptor end of tRNA(Asp).</text>
</comment>
<comment type="catalytic activity">
    <reaction evidence="1">
        <text>tRNA(Asp) + L-aspartate + ATP = L-aspartyl-tRNA(Asp) + AMP + diphosphate</text>
        <dbReference type="Rhea" id="RHEA:19649"/>
        <dbReference type="Rhea" id="RHEA-COMP:9660"/>
        <dbReference type="Rhea" id="RHEA-COMP:9678"/>
        <dbReference type="ChEBI" id="CHEBI:29991"/>
        <dbReference type="ChEBI" id="CHEBI:30616"/>
        <dbReference type="ChEBI" id="CHEBI:33019"/>
        <dbReference type="ChEBI" id="CHEBI:78442"/>
        <dbReference type="ChEBI" id="CHEBI:78516"/>
        <dbReference type="ChEBI" id="CHEBI:456215"/>
        <dbReference type="EC" id="6.1.1.12"/>
    </reaction>
</comment>
<comment type="subunit">
    <text evidence="1">Homodimer.</text>
</comment>
<comment type="subcellular location">
    <subcellularLocation>
        <location evidence="1">Cytoplasm</location>
    </subcellularLocation>
</comment>
<comment type="similarity">
    <text evidence="1">Belongs to the class-II aminoacyl-tRNA synthetase family. Type 1 subfamily.</text>
</comment>
<evidence type="ECO:0000255" key="1">
    <source>
        <dbReference type="HAMAP-Rule" id="MF_00044"/>
    </source>
</evidence>
<feature type="chain" id="PRO_0000110947" description="Aspartate--tRNA ligase">
    <location>
        <begin position="1"/>
        <end position="588"/>
    </location>
</feature>
<feature type="region of interest" description="Aspartate" evidence="1">
    <location>
        <begin position="201"/>
        <end position="204"/>
    </location>
</feature>
<feature type="binding site" evidence="1">
    <location>
        <position position="177"/>
    </location>
    <ligand>
        <name>L-aspartate</name>
        <dbReference type="ChEBI" id="CHEBI:29991"/>
    </ligand>
</feature>
<feature type="binding site" evidence="1">
    <location>
        <begin position="223"/>
        <end position="225"/>
    </location>
    <ligand>
        <name>ATP</name>
        <dbReference type="ChEBI" id="CHEBI:30616"/>
    </ligand>
</feature>
<feature type="binding site" evidence="1">
    <location>
        <position position="223"/>
    </location>
    <ligand>
        <name>L-aspartate</name>
        <dbReference type="ChEBI" id="CHEBI:29991"/>
    </ligand>
</feature>
<feature type="binding site" evidence="1">
    <location>
        <position position="232"/>
    </location>
    <ligand>
        <name>ATP</name>
        <dbReference type="ChEBI" id="CHEBI:30616"/>
    </ligand>
</feature>
<feature type="binding site" evidence="1">
    <location>
        <position position="451"/>
    </location>
    <ligand>
        <name>L-aspartate</name>
        <dbReference type="ChEBI" id="CHEBI:29991"/>
    </ligand>
</feature>
<feature type="binding site" evidence="1">
    <location>
        <position position="485"/>
    </location>
    <ligand>
        <name>ATP</name>
        <dbReference type="ChEBI" id="CHEBI:30616"/>
    </ligand>
</feature>
<feature type="binding site" evidence="1">
    <location>
        <position position="492"/>
    </location>
    <ligand>
        <name>L-aspartate</name>
        <dbReference type="ChEBI" id="CHEBI:29991"/>
    </ligand>
</feature>
<feature type="binding site" evidence="1">
    <location>
        <begin position="537"/>
        <end position="540"/>
    </location>
    <ligand>
        <name>ATP</name>
        <dbReference type="ChEBI" id="CHEBI:30616"/>
    </ligand>
</feature>
<protein>
    <recommendedName>
        <fullName evidence="1">Aspartate--tRNA ligase</fullName>
        <ecNumber evidence="1">6.1.1.12</ecNumber>
    </recommendedName>
    <alternativeName>
        <fullName evidence="1">Aspartyl-tRNA synthetase</fullName>
        <shortName evidence="1">AspRS</shortName>
    </alternativeName>
</protein>
<proteinExistence type="inferred from homology"/>
<organism>
    <name type="scientific">Staphylococcus epidermidis (strain ATCC 12228 / FDA PCI 1200)</name>
    <dbReference type="NCBI Taxonomy" id="176280"/>
    <lineage>
        <taxon>Bacteria</taxon>
        <taxon>Bacillati</taxon>
        <taxon>Bacillota</taxon>
        <taxon>Bacilli</taxon>
        <taxon>Bacillales</taxon>
        <taxon>Staphylococcaceae</taxon>
        <taxon>Staphylococcus</taxon>
    </lineage>
</organism>